<feature type="chain" id="PRO_0000126335" description="Large ribosomal subunit protein bL36c">
    <location>
        <begin position="1"/>
        <end position="37"/>
    </location>
</feature>
<comment type="subcellular location">
    <subcellularLocation>
        <location>Plastid</location>
        <location>Chloroplast</location>
    </subcellularLocation>
</comment>
<comment type="similarity">
    <text evidence="1">Belongs to the bacterial ribosomal protein bL36 family.</text>
</comment>
<accession>Q68RX3</accession>
<proteinExistence type="inferred from homology"/>
<gene>
    <name evidence="1" type="primary">rpl36</name>
    <name type="ORF">PSC0814</name>
</gene>
<sequence>MKIRASVRKICEKCRLIRRRGRIIVICSNPRHKQRQG</sequence>
<geneLocation type="chloroplast"/>
<evidence type="ECO:0000255" key="1">
    <source>
        <dbReference type="HAMAP-Rule" id="MF_00251"/>
    </source>
</evidence>
<evidence type="ECO:0000305" key="2"/>
<reference key="1">
    <citation type="journal article" date="2004" name="DNA Res.">
        <title>Complete chloroplast genome sequence from Korea ginseng (Panax schinseng Nees) and comparative analysis of sequence evolution among 17 vascular plants.</title>
        <authorList>
            <person name="Kim K.-J."/>
            <person name="Lee H.-L."/>
        </authorList>
    </citation>
    <scope>NUCLEOTIDE SEQUENCE [LARGE SCALE GENOMIC DNA]</scope>
</reference>
<dbReference type="EMBL" id="AY582139">
    <property type="protein sequence ID" value="AAT98542.1"/>
    <property type="molecule type" value="Genomic_DNA"/>
</dbReference>
<dbReference type="RefSeq" id="YP_086999.1">
    <property type="nucleotide sequence ID" value="NC_006290.1"/>
</dbReference>
<dbReference type="SMR" id="Q68RX3"/>
<dbReference type="GeneID" id="3021568"/>
<dbReference type="GO" id="GO:0009507">
    <property type="term" value="C:chloroplast"/>
    <property type="evidence" value="ECO:0007669"/>
    <property type="project" value="UniProtKB-SubCell"/>
</dbReference>
<dbReference type="GO" id="GO:1990904">
    <property type="term" value="C:ribonucleoprotein complex"/>
    <property type="evidence" value="ECO:0007669"/>
    <property type="project" value="UniProtKB-KW"/>
</dbReference>
<dbReference type="GO" id="GO:0005840">
    <property type="term" value="C:ribosome"/>
    <property type="evidence" value="ECO:0007669"/>
    <property type="project" value="UniProtKB-KW"/>
</dbReference>
<dbReference type="GO" id="GO:0003735">
    <property type="term" value="F:structural constituent of ribosome"/>
    <property type="evidence" value="ECO:0007669"/>
    <property type="project" value="InterPro"/>
</dbReference>
<dbReference type="GO" id="GO:0006412">
    <property type="term" value="P:translation"/>
    <property type="evidence" value="ECO:0007669"/>
    <property type="project" value="UniProtKB-UniRule"/>
</dbReference>
<dbReference type="HAMAP" id="MF_00251">
    <property type="entry name" value="Ribosomal_bL36"/>
    <property type="match status" value="1"/>
</dbReference>
<dbReference type="InterPro" id="IPR000473">
    <property type="entry name" value="Ribosomal_bL36"/>
</dbReference>
<dbReference type="InterPro" id="IPR035977">
    <property type="entry name" value="Ribosomal_bL36_sp"/>
</dbReference>
<dbReference type="NCBIfam" id="TIGR01022">
    <property type="entry name" value="rpmJ_bact"/>
    <property type="match status" value="1"/>
</dbReference>
<dbReference type="PANTHER" id="PTHR42888">
    <property type="entry name" value="50S RIBOSOMAL PROTEIN L36, CHLOROPLASTIC"/>
    <property type="match status" value="1"/>
</dbReference>
<dbReference type="PANTHER" id="PTHR42888:SF1">
    <property type="entry name" value="LARGE RIBOSOMAL SUBUNIT PROTEIN BL36C"/>
    <property type="match status" value="1"/>
</dbReference>
<dbReference type="Pfam" id="PF00444">
    <property type="entry name" value="Ribosomal_L36"/>
    <property type="match status" value="1"/>
</dbReference>
<dbReference type="SUPFAM" id="SSF57840">
    <property type="entry name" value="Ribosomal protein L36"/>
    <property type="match status" value="1"/>
</dbReference>
<dbReference type="PROSITE" id="PS00828">
    <property type="entry name" value="RIBOSOMAL_L36"/>
    <property type="match status" value="1"/>
</dbReference>
<protein>
    <recommendedName>
        <fullName evidence="1">Large ribosomal subunit protein bL36c</fullName>
    </recommendedName>
    <alternativeName>
        <fullName evidence="2">50S ribosomal protein L36, chloroplastic</fullName>
    </alternativeName>
</protein>
<organism>
    <name type="scientific">Panax ginseng</name>
    <name type="common">Korean ginseng</name>
    <dbReference type="NCBI Taxonomy" id="4054"/>
    <lineage>
        <taxon>Eukaryota</taxon>
        <taxon>Viridiplantae</taxon>
        <taxon>Streptophyta</taxon>
        <taxon>Embryophyta</taxon>
        <taxon>Tracheophyta</taxon>
        <taxon>Spermatophyta</taxon>
        <taxon>Magnoliopsida</taxon>
        <taxon>eudicotyledons</taxon>
        <taxon>Gunneridae</taxon>
        <taxon>Pentapetalae</taxon>
        <taxon>asterids</taxon>
        <taxon>campanulids</taxon>
        <taxon>Apiales</taxon>
        <taxon>Araliaceae</taxon>
        <taxon>Panax</taxon>
    </lineage>
</organism>
<keyword id="KW-0150">Chloroplast</keyword>
<keyword id="KW-0934">Plastid</keyword>
<keyword id="KW-0687">Ribonucleoprotein</keyword>
<keyword id="KW-0689">Ribosomal protein</keyword>
<name>RK36_PANGI</name>